<dbReference type="EMBL" id="FJ959160">
    <property type="protein sequence ID" value="ADB93130.1"/>
    <property type="molecule type" value="Genomic_DNA"/>
</dbReference>
<dbReference type="SMR" id="D6C4L8"/>
<dbReference type="ConoServer" id="4044">
    <property type="toxin name" value="Cal9.3 precursor"/>
</dbReference>
<dbReference type="GO" id="GO:0005576">
    <property type="term" value="C:extracellular region"/>
    <property type="evidence" value="ECO:0007669"/>
    <property type="project" value="UniProtKB-SubCell"/>
</dbReference>
<dbReference type="GO" id="GO:0008200">
    <property type="term" value="F:ion channel inhibitor activity"/>
    <property type="evidence" value="ECO:0007669"/>
    <property type="project" value="InterPro"/>
</dbReference>
<dbReference type="GO" id="GO:0090729">
    <property type="term" value="F:toxin activity"/>
    <property type="evidence" value="ECO:0007669"/>
    <property type="project" value="UniProtKB-KW"/>
</dbReference>
<dbReference type="InterPro" id="IPR004214">
    <property type="entry name" value="Conotoxin"/>
</dbReference>
<dbReference type="Pfam" id="PF02950">
    <property type="entry name" value="Conotoxin"/>
    <property type="match status" value="1"/>
</dbReference>
<feature type="signal peptide" evidence="2">
    <location>
        <begin position="1"/>
        <end position="20"/>
    </location>
</feature>
<feature type="propeptide" id="PRO_0000415037" evidence="1">
    <location>
        <begin position="21"/>
        <end position="50"/>
    </location>
</feature>
<feature type="peptide" id="PRO_0000415038" description="Conotoxin Cl9.1">
    <location>
        <begin position="51"/>
        <end position="70"/>
    </location>
</feature>
<feature type="disulfide bond" evidence="1">
    <location>
        <begin position="51"/>
        <end position="63"/>
    </location>
</feature>
<feature type="disulfide bond" evidence="1">
    <location>
        <begin position="56"/>
        <end position="67"/>
    </location>
</feature>
<feature type="disulfide bond" evidence="1">
    <location>
        <begin position="61"/>
        <end position="70"/>
    </location>
</feature>
<protein>
    <recommendedName>
        <fullName>Conotoxin Cl9.1</fullName>
    </recommendedName>
</protein>
<proteinExistence type="inferred from homology"/>
<sequence length="70" mass="7668">MMGKLGVVLFICLVLFPLETLQLEGGQQADRHVDQLEGNPNRETRTIEVRCTTMNCLKGHCGCSPDCGSC</sequence>
<reference key="1">
    <citation type="journal article" date="2010" name="Mol. Phylogenet. Evol.">
        <title>Evolution of Conus peptide toxins: analysis of Conus californicus Reeve, 1844.</title>
        <authorList>
            <person name="Biggs J.S."/>
            <person name="Watkins M."/>
            <person name="Puillandre N."/>
            <person name="Ownby J.P."/>
            <person name="Lopez-Vera E."/>
            <person name="Christensen S."/>
            <person name="Moreno K.J."/>
            <person name="Bernaldez J."/>
            <person name="Licea-Navarro A."/>
            <person name="Corneli P.S."/>
            <person name="Olivera B.M."/>
        </authorList>
    </citation>
    <scope>NUCLEOTIDE SEQUENCE [GENOMIC DNA]</scope>
</reference>
<name>CM91_CONCL</name>
<keyword id="KW-1015">Disulfide bond</keyword>
<keyword id="KW-0528">Neurotoxin</keyword>
<keyword id="KW-0964">Secreted</keyword>
<keyword id="KW-0732">Signal</keyword>
<keyword id="KW-0800">Toxin</keyword>
<accession>D6C4L8</accession>
<evidence type="ECO:0000250" key="1"/>
<evidence type="ECO:0000255" key="2"/>
<evidence type="ECO:0000305" key="3"/>
<comment type="subcellular location">
    <subcellularLocation>
        <location evidence="1">Secreted</location>
    </subcellularLocation>
</comment>
<comment type="tissue specificity">
    <text>Expressed by the venom duct.</text>
</comment>
<comment type="domain">
    <text>The cysteine framework is IX (C-C-C-C-C-C).</text>
</comment>
<comment type="similarity">
    <text evidence="3">Belongs to the conotoxin M superfamily.</text>
</comment>
<organism>
    <name type="scientific">Californiconus californicus</name>
    <name type="common">California cone</name>
    <name type="synonym">Conus californicus</name>
    <dbReference type="NCBI Taxonomy" id="1736779"/>
    <lineage>
        <taxon>Eukaryota</taxon>
        <taxon>Metazoa</taxon>
        <taxon>Spiralia</taxon>
        <taxon>Lophotrochozoa</taxon>
        <taxon>Mollusca</taxon>
        <taxon>Gastropoda</taxon>
        <taxon>Caenogastropoda</taxon>
        <taxon>Neogastropoda</taxon>
        <taxon>Conoidea</taxon>
        <taxon>Conidae</taxon>
        <taxon>Californiconus</taxon>
    </lineage>
</organism>